<accession>P84172</accession>
<comment type="function">
    <text evidence="2">GTP hydrolase that promotes the GTP-dependent binding of aminoacyl-tRNA to the A-site of ribosomes during protein biosynthesis.</text>
</comment>
<comment type="catalytic activity">
    <reaction evidence="1">
        <text>GTP + H2O = GDP + phosphate + H(+)</text>
        <dbReference type="Rhea" id="RHEA:19669"/>
        <dbReference type="ChEBI" id="CHEBI:15377"/>
        <dbReference type="ChEBI" id="CHEBI:15378"/>
        <dbReference type="ChEBI" id="CHEBI:37565"/>
        <dbReference type="ChEBI" id="CHEBI:43474"/>
        <dbReference type="ChEBI" id="CHEBI:58189"/>
        <dbReference type="EC" id="3.6.5.3"/>
    </reaction>
    <physiologicalReaction direction="left-to-right" evidence="1">
        <dbReference type="Rhea" id="RHEA:19670"/>
    </physiologicalReaction>
</comment>
<comment type="subcellular location">
    <subcellularLocation>
        <location evidence="2">Mitochondrion</location>
    </subcellularLocation>
</comment>
<comment type="mass spectrometry" mass="27665.0" error="1.0" method="MALDI" evidence="4"/>
<comment type="similarity">
    <text evidence="3">Belongs to the TRAFAC class translation factor GTPase superfamily. Classic translation factor GTPase family. EF-Tu/EF-1A subfamily.</text>
</comment>
<gene>
    <name evidence="2" type="primary">TUFM</name>
</gene>
<proteinExistence type="evidence at protein level"/>
<organism>
    <name type="scientific">Gallus gallus</name>
    <name type="common">Chicken</name>
    <dbReference type="NCBI Taxonomy" id="9031"/>
    <lineage>
        <taxon>Eukaryota</taxon>
        <taxon>Metazoa</taxon>
        <taxon>Chordata</taxon>
        <taxon>Craniata</taxon>
        <taxon>Vertebrata</taxon>
        <taxon>Euteleostomi</taxon>
        <taxon>Archelosauria</taxon>
        <taxon>Archosauria</taxon>
        <taxon>Dinosauria</taxon>
        <taxon>Saurischia</taxon>
        <taxon>Theropoda</taxon>
        <taxon>Coelurosauria</taxon>
        <taxon>Aves</taxon>
        <taxon>Neognathae</taxon>
        <taxon>Galloanserae</taxon>
        <taxon>Galliformes</taxon>
        <taxon>Phasianidae</taxon>
        <taxon>Phasianinae</taxon>
        <taxon>Gallus</taxon>
    </lineage>
</organism>
<reference evidence="5" key="1">
    <citation type="submission" date="2003-05" db="EMBL/GenBank/DDBJ databases">
        <title>Chicken ESTs from muscle.</title>
        <authorList>
            <person name="Cogburn L.A."/>
            <person name="Monsonego-Ornan E."/>
        </authorList>
    </citation>
    <scope>NUCLEOTIDE SEQUENCE [LARGE SCALE MRNA] OF 1-208</scope>
</reference>
<reference evidence="5" key="2">
    <citation type="submission" date="2001-02" db="EMBL/GenBank/DDBJ databases">
        <authorList>
            <person name="Murray F."/>
        </authorList>
    </citation>
    <scope>NUCLEOTIDE SEQUENCE [LARGE SCALE MRNA] OF 203-352</scope>
    <source>
        <tissue>Embryo</tissue>
    </source>
</reference>
<reference evidence="5" key="3">
    <citation type="journal article" date="2005" name="Proteomics">
        <title>Proteomic analysis of the Gallus gallus embryo at stage-29 of development.</title>
        <authorList>
            <person name="Agudo D."/>
            <person name="Gomez-Esquer F."/>
            <person name="Diaz-Gil G."/>
            <person name="Martinez-Arribas F."/>
            <person name="Delcan J."/>
            <person name="Schneider J."/>
            <person name="Palomar M.A."/>
            <person name="Linares R."/>
        </authorList>
    </citation>
    <scope>IDENTIFICATION</scope>
    <scope>MASS SPECTROMETRY</scope>
    <source>
        <tissue evidence="4">Embryo</tissue>
    </source>
</reference>
<protein>
    <recommendedName>
        <fullName>Elongation factor Tu, mitochondrial</fullName>
        <shortName>EF-Tu</shortName>
        <ecNumber evidence="1">3.6.5.3</ecNumber>
    </recommendedName>
</protein>
<feature type="transit peptide" description="Mitochondrion" evidence="5">
    <location>
        <begin position="1" status="less than"/>
        <end status="unknown"/>
    </location>
</feature>
<feature type="chain" id="PRO_0000223488" description="Elongation factor Tu, mitochondrial">
    <location>
        <begin status="unknown"/>
        <end position="352" status="greater than"/>
    </location>
</feature>
<feature type="domain" description="tr-type G" evidence="3">
    <location>
        <begin position="45"/>
        <end position="241"/>
    </location>
</feature>
<feature type="region of interest" description="G1" evidence="3">
    <location>
        <begin position="54"/>
        <end position="61"/>
    </location>
</feature>
<feature type="region of interest" description="G2" evidence="3">
    <location>
        <begin position="95"/>
        <end position="99"/>
    </location>
</feature>
<feature type="region of interest" description="G3" evidence="3">
    <location>
        <begin position="116"/>
        <end position="119"/>
    </location>
</feature>
<feature type="region of interest" description="G4" evidence="3">
    <location>
        <begin position="171"/>
        <end position="174"/>
    </location>
</feature>
<feature type="region of interest" description="G5" evidence="3">
    <location>
        <begin position="209"/>
        <end position="211"/>
    </location>
</feature>
<feature type="binding site" evidence="1">
    <location>
        <position position="57"/>
    </location>
    <ligand>
        <name>GTP</name>
        <dbReference type="ChEBI" id="CHEBI:37565"/>
    </ligand>
</feature>
<feature type="binding site" evidence="1">
    <location>
        <position position="59"/>
    </location>
    <ligand>
        <name>GTP</name>
        <dbReference type="ChEBI" id="CHEBI:37565"/>
    </ligand>
</feature>
<feature type="binding site" evidence="1">
    <location>
        <position position="60"/>
    </location>
    <ligand>
        <name>GTP</name>
        <dbReference type="ChEBI" id="CHEBI:37565"/>
    </ligand>
</feature>
<feature type="binding site" evidence="1">
    <location>
        <position position="61"/>
    </location>
    <ligand>
        <name>GTP</name>
        <dbReference type="ChEBI" id="CHEBI:37565"/>
    </ligand>
</feature>
<feature type="binding site" evidence="1">
    <location>
        <position position="61"/>
    </location>
    <ligand>
        <name>Mg(2+)</name>
        <dbReference type="ChEBI" id="CHEBI:18420"/>
    </ligand>
</feature>
<feature type="binding site" evidence="1">
    <location>
        <position position="62"/>
    </location>
    <ligand>
        <name>GTP</name>
        <dbReference type="ChEBI" id="CHEBI:37565"/>
    </ligand>
</feature>
<feature type="binding site" evidence="1">
    <location>
        <position position="171"/>
    </location>
    <ligand>
        <name>GTP</name>
        <dbReference type="ChEBI" id="CHEBI:37565"/>
    </ligand>
</feature>
<feature type="binding site" evidence="1">
    <location>
        <position position="174"/>
    </location>
    <ligand>
        <name>GTP</name>
        <dbReference type="ChEBI" id="CHEBI:37565"/>
    </ligand>
</feature>
<feature type="binding site" evidence="1">
    <location>
        <position position="209"/>
    </location>
    <ligand>
        <name>GTP</name>
        <dbReference type="ChEBI" id="CHEBI:37565"/>
    </ligand>
</feature>
<feature type="binding site" evidence="1">
    <location>
        <position position="210"/>
    </location>
    <ligand>
        <name>GTP</name>
        <dbReference type="ChEBI" id="CHEBI:37565"/>
    </ligand>
</feature>
<feature type="binding site" evidence="1">
    <location>
        <position position="211"/>
    </location>
    <ligand>
        <name>GTP</name>
        <dbReference type="ChEBI" id="CHEBI:37565"/>
    </ligand>
</feature>
<feature type="non-terminal residue" evidence="5">
    <location>
        <position position="1"/>
    </location>
</feature>
<feature type="non-terminal residue" evidence="5">
    <location>
        <position position="352"/>
    </location>
</feature>
<name>EFTU_CHICK</name>
<evidence type="ECO:0000250" key="1">
    <source>
        <dbReference type="UniProtKB" id="P0CE47"/>
    </source>
</evidence>
<evidence type="ECO:0000250" key="2">
    <source>
        <dbReference type="UniProtKB" id="P49411"/>
    </source>
</evidence>
<evidence type="ECO:0000255" key="3">
    <source>
        <dbReference type="PROSITE-ProRule" id="PRU01059"/>
    </source>
</evidence>
<evidence type="ECO:0000269" key="4">
    <source>
    </source>
</evidence>
<evidence type="ECO:0000305" key="5"/>
<keyword id="KW-0251">Elongation factor</keyword>
<keyword id="KW-0342">GTP-binding</keyword>
<keyword id="KW-0378">Hydrolase</keyword>
<keyword id="KW-0460">Magnesium</keyword>
<keyword id="KW-0479">Metal-binding</keyword>
<keyword id="KW-0496">Mitochondrion</keyword>
<keyword id="KW-0547">Nucleotide-binding</keyword>
<keyword id="KW-0648">Protein biosynthesis</keyword>
<keyword id="KW-1185">Reference proteome</keyword>
<keyword id="KW-0809">Transit peptide</keyword>
<sequence length="352" mass="38250">GPLRVRTSKMALPAALLRAAALRCRLPLASVGRRHLAAEAFVRDRPHVNVGTIGHVDHGKTTLTAAITKVLSESGGARFQRYEDIDKAPEERARGITINAAHVEYSTARRHYAHTDCPGHADYVKNMITGTAPLDGCILVVAATDGQMPQTREHLLLARQVGVRHVVVYVNKADAVSDAELLPLVELELRELLAEMGYDAERTPVVVGSALCALQDRDPTLGRDSVLQLLEAIDTHIPLPHRDVQRPFLLPIEGVHSIPGRGTVVTGTVERGAVSKGDECELRGYGRVLKAVVTGLETFHKSLPRAEAGDNVGALLRGLRREDVRRGMVMGQPGALRDHRKLQAQVYVLSAQ</sequence>
<dbReference type="EC" id="3.6.5.3" evidence="1"/>
<dbReference type="EMBL" id="CD215156">
    <property type="status" value="NOT_ANNOTATED_CDS"/>
    <property type="molecule type" value="mRNA"/>
</dbReference>
<dbReference type="EMBL" id="AL585562">
    <property type="status" value="NOT_ANNOTATED_CDS"/>
    <property type="molecule type" value="mRNA"/>
</dbReference>
<dbReference type="SMR" id="P84172"/>
<dbReference type="FunCoup" id="P84172">
    <property type="interactions" value="2483"/>
</dbReference>
<dbReference type="VEuPathDB" id="HostDB:geneid_419244"/>
<dbReference type="InParanoid" id="P84172"/>
<dbReference type="PhylomeDB" id="P84172"/>
<dbReference type="Proteomes" id="UP000000539">
    <property type="component" value="Unassembled WGS sequence"/>
</dbReference>
<dbReference type="GO" id="GO:0005739">
    <property type="term" value="C:mitochondrion"/>
    <property type="evidence" value="ECO:0000250"/>
    <property type="project" value="UniProtKB"/>
</dbReference>
<dbReference type="GO" id="GO:0005525">
    <property type="term" value="F:GTP binding"/>
    <property type="evidence" value="ECO:0000250"/>
    <property type="project" value="UniProtKB"/>
</dbReference>
<dbReference type="GO" id="GO:0003924">
    <property type="term" value="F:GTPase activity"/>
    <property type="evidence" value="ECO:0000250"/>
    <property type="project" value="UniProtKB"/>
</dbReference>
<dbReference type="GO" id="GO:0000287">
    <property type="term" value="F:magnesium ion binding"/>
    <property type="evidence" value="ECO:0000250"/>
    <property type="project" value="UniProtKB"/>
</dbReference>
<dbReference type="GO" id="GO:0003746">
    <property type="term" value="F:translation elongation factor activity"/>
    <property type="evidence" value="ECO:0000250"/>
    <property type="project" value="UniProtKB"/>
</dbReference>
<dbReference type="GO" id="GO:0070125">
    <property type="term" value="P:mitochondrial translational elongation"/>
    <property type="evidence" value="ECO:0000318"/>
    <property type="project" value="GO_Central"/>
</dbReference>
<dbReference type="GO" id="GO:0006414">
    <property type="term" value="P:translational elongation"/>
    <property type="evidence" value="ECO:0000250"/>
    <property type="project" value="UniProtKB"/>
</dbReference>
<dbReference type="CDD" id="cd01884">
    <property type="entry name" value="EF_Tu"/>
    <property type="match status" value="1"/>
</dbReference>
<dbReference type="CDD" id="cd03697">
    <property type="entry name" value="EFTU_II"/>
    <property type="match status" value="1"/>
</dbReference>
<dbReference type="FunFam" id="2.40.30.10:FF:000001">
    <property type="entry name" value="Elongation factor Tu"/>
    <property type="match status" value="1"/>
</dbReference>
<dbReference type="FunFam" id="3.40.50.300:FF:000003">
    <property type="entry name" value="Elongation factor Tu"/>
    <property type="match status" value="1"/>
</dbReference>
<dbReference type="Gene3D" id="3.40.50.300">
    <property type="entry name" value="P-loop containing nucleotide triphosphate hydrolases"/>
    <property type="match status" value="1"/>
</dbReference>
<dbReference type="Gene3D" id="2.40.30.10">
    <property type="entry name" value="Translation factors"/>
    <property type="match status" value="1"/>
</dbReference>
<dbReference type="InterPro" id="IPR041709">
    <property type="entry name" value="EF-Tu_GTP-bd"/>
</dbReference>
<dbReference type="InterPro" id="IPR050055">
    <property type="entry name" value="EF-Tu_GTPase"/>
</dbReference>
<dbReference type="InterPro" id="IPR004161">
    <property type="entry name" value="EFTu-like_2"/>
</dbReference>
<dbReference type="InterPro" id="IPR033720">
    <property type="entry name" value="EFTU_2"/>
</dbReference>
<dbReference type="InterPro" id="IPR031157">
    <property type="entry name" value="G_TR_CS"/>
</dbReference>
<dbReference type="InterPro" id="IPR027417">
    <property type="entry name" value="P-loop_NTPase"/>
</dbReference>
<dbReference type="InterPro" id="IPR000795">
    <property type="entry name" value="T_Tr_GTP-bd_dom"/>
</dbReference>
<dbReference type="InterPro" id="IPR009000">
    <property type="entry name" value="Transl_B-barrel_sf"/>
</dbReference>
<dbReference type="NCBIfam" id="NF000766">
    <property type="entry name" value="PRK00049.1"/>
    <property type="match status" value="1"/>
</dbReference>
<dbReference type="NCBIfam" id="NF009373">
    <property type="entry name" value="PRK12736.1"/>
    <property type="match status" value="1"/>
</dbReference>
<dbReference type="PANTHER" id="PTHR43721:SF36">
    <property type="entry name" value="ELONGATION FACTOR TU, MITOCHONDRIAL"/>
    <property type="match status" value="1"/>
</dbReference>
<dbReference type="PANTHER" id="PTHR43721">
    <property type="entry name" value="ELONGATION FACTOR TU-RELATED"/>
    <property type="match status" value="1"/>
</dbReference>
<dbReference type="Pfam" id="PF00009">
    <property type="entry name" value="GTP_EFTU"/>
    <property type="match status" value="1"/>
</dbReference>
<dbReference type="Pfam" id="PF03144">
    <property type="entry name" value="GTP_EFTU_D2"/>
    <property type="match status" value="1"/>
</dbReference>
<dbReference type="PRINTS" id="PR00315">
    <property type="entry name" value="ELONGATNFCT"/>
</dbReference>
<dbReference type="SUPFAM" id="SSF52540">
    <property type="entry name" value="P-loop containing nucleoside triphosphate hydrolases"/>
    <property type="match status" value="1"/>
</dbReference>
<dbReference type="SUPFAM" id="SSF50447">
    <property type="entry name" value="Translation proteins"/>
    <property type="match status" value="1"/>
</dbReference>
<dbReference type="PROSITE" id="PS00301">
    <property type="entry name" value="G_TR_1"/>
    <property type="match status" value="1"/>
</dbReference>
<dbReference type="PROSITE" id="PS51722">
    <property type="entry name" value="G_TR_2"/>
    <property type="match status" value="1"/>
</dbReference>